<dbReference type="EMBL" id="CP003825">
    <property type="protein sequence ID" value="AFR95419.1"/>
    <property type="molecule type" value="Genomic_DNA"/>
</dbReference>
<dbReference type="RefSeq" id="XP_012050133.1">
    <property type="nucleotide sequence ID" value="XM_012194743.1"/>
</dbReference>
<dbReference type="SMR" id="J9VS56"/>
<dbReference type="GeneID" id="23886037"/>
<dbReference type="KEGG" id="cng:CNAG_02415"/>
<dbReference type="VEuPathDB" id="FungiDB:CNAG_02415"/>
<dbReference type="HOGENOM" id="CLU_025300_4_2_1"/>
<dbReference type="OrthoDB" id="7149at5206"/>
<dbReference type="PHI-base" id="PHI:9258"/>
<dbReference type="Proteomes" id="UP000010091">
    <property type="component" value="Chromosome 6"/>
</dbReference>
<dbReference type="GO" id="GO:0005737">
    <property type="term" value="C:cytoplasm"/>
    <property type="evidence" value="ECO:0007669"/>
    <property type="project" value="TreeGrafter"/>
</dbReference>
<dbReference type="GO" id="GO:0005634">
    <property type="term" value="C:nucleus"/>
    <property type="evidence" value="ECO:0007669"/>
    <property type="project" value="TreeGrafter"/>
</dbReference>
<dbReference type="GO" id="GO:0005886">
    <property type="term" value="C:plasma membrane"/>
    <property type="evidence" value="ECO:0007669"/>
    <property type="project" value="TreeGrafter"/>
</dbReference>
<dbReference type="GO" id="GO:0012506">
    <property type="term" value="C:vesicle membrane"/>
    <property type="evidence" value="ECO:0007669"/>
    <property type="project" value="TreeGrafter"/>
</dbReference>
<dbReference type="GO" id="GO:0005509">
    <property type="term" value="F:calcium ion binding"/>
    <property type="evidence" value="ECO:0007669"/>
    <property type="project" value="InterPro"/>
</dbReference>
<dbReference type="GO" id="GO:0005544">
    <property type="term" value="F:calcium-dependent phospholipid binding"/>
    <property type="evidence" value="ECO:0007669"/>
    <property type="project" value="UniProtKB-KW"/>
</dbReference>
<dbReference type="GO" id="GO:0001786">
    <property type="term" value="F:phosphatidylserine binding"/>
    <property type="evidence" value="ECO:0007669"/>
    <property type="project" value="TreeGrafter"/>
</dbReference>
<dbReference type="Gene3D" id="1.10.220.10">
    <property type="entry name" value="Annexin"/>
    <property type="match status" value="4"/>
</dbReference>
<dbReference type="InterPro" id="IPR001464">
    <property type="entry name" value="Annexin"/>
</dbReference>
<dbReference type="InterPro" id="IPR018502">
    <property type="entry name" value="Annexin_repeat"/>
</dbReference>
<dbReference type="InterPro" id="IPR018252">
    <property type="entry name" value="Annexin_repeat_CS"/>
</dbReference>
<dbReference type="InterPro" id="IPR037104">
    <property type="entry name" value="Annexin_sf"/>
</dbReference>
<dbReference type="PANTHER" id="PTHR10502">
    <property type="entry name" value="ANNEXIN"/>
    <property type="match status" value="1"/>
</dbReference>
<dbReference type="PANTHER" id="PTHR10502:SF102">
    <property type="entry name" value="ANNEXIN B11"/>
    <property type="match status" value="1"/>
</dbReference>
<dbReference type="Pfam" id="PF00191">
    <property type="entry name" value="Annexin"/>
    <property type="match status" value="4"/>
</dbReference>
<dbReference type="PRINTS" id="PR00196">
    <property type="entry name" value="ANNEXIN"/>
</dbReference>
<dbReference type="SMART" id="SM00335">
    <property type="entry name" value="ANX"/>
    <property type="match status" value="4"/>
</dbReference>
<dbReference type="SUPFAM" id="SSF47874">
    <property type="entry name" value="Annexin"/>
    <property type="match status" value="1"/>
</dbReference>
<dbReference type="PROSITE" id="PS00223">
    <property type="entry name" value="ANNEXIN_1"/>
    <property type="match status" value="1"/>
</dbReference>
<dbReference type="PROSITE" id="PS51897">
    <property type="entry name" value="ANNEXIN_2"/>
    <property type="match status" value="4"/>
</dbReference>
<comment type="function">
    <text evidence="4">Does not appear to play a major role in virulence (PubMed:31140968). May play a role in titan cell formation (PubMed:31140968).</text>
</comment>
<comment type="domain">
    <text evidence="2">A pair of annexin repeats may form one binding site for calcium and phospholipid.</text>
</comment>
<comment type="disruption phenotype">
    <text evidence="4">Increases titan cell formation (low penetrance) (PubMed:31140968). Low or no sensitivity to high temperature or tacrolimus (calcineurin inhibitor); sensitivity may be background dependent (PubMed:31140968). No cell population growth phenotype in a variety of conditions including high pH, low calcium, in presence of the antifungals amphotericin B or fluconazole, heavy metals (nickel or zinc), osmotic stress (NaCl), cell wall integrity stressors (Calcofluor White, caffeine, or Congo Red), oxidative stress (H2O2), or nitro-oxidative stress (NaNO2 or H2O2), or following ultraviolet light radiation (PubMed:31140968). Normal mating (PubMed:31140968). Normal virulence factor secretion; assayed using melanin and urease (PubMed:31140968). Normal virulence in mouse intranasal, intravenous, and intratracheal infection models or in an invertebrate infection model (PubMed:31140968). Normal survival rate following amoebal ingestion (PubMed:31140968).</text>
</comment>
<comment type="similarity">
    <text evidence="1">Belongs to the annexin family.</text>
</comment>
<accession>J9VS56</accession>
<organism evidence="8">
    <name type="scientific">Cryptococcus neoformans var. grubii serotype A (strain H99 / ATCC 208821 / CBS 10515 / FGSC 9487)</name>
    <name type="common">Filobasidiella neoformans var. grubii</name>
    <dbReference type="NCBI Taxonomy" id="235443"/>
    <lineage>
        <taxon>Eukaryota</taxon>
        <taxon>Fungi</taxon>
        <taxon>Dikarya</taxon>
        <taxon>Basidiomycota</taxon>
        <taxon>Agaricomycotina</taxon>
        <taxon>Tremellomycetes</taxon>
        <taxon>Tremellales</taxon>
        <taxon>Cryptococcaceae</taxon>
        <taxon>Cryptococcus</taxon>
        <taxon>Cryptococcus neoformans species complex</taxon>
    </lineage>
</organism>
<gene>
    <name evidence="5" type="primary">ANXC1</name>
    <name evidence="5" type="synonym">ANX1</name>
    <name evidence="5" type="synonym">ANXC3.1</name>
    <name evidence="7" type="ORF">CNAG_02415</name>
</gene>
<protein>
    <recommendedName>
        <fullName evidence="5">Annexin C1</fullName>
    </recommendedName>
</protein>
<sequence>MYGQQNNYGAPPPQQWGQAPPQGYQPGYQNGPPAVNYGAHPSQQQQWGAPPGPPQHQPYGAPPVNQYGAPPQHQQGYGGHSPQPPFGAPSPAPAGYGAPPTAPQGQYGAPSPYPQQPPQQGFGGPQQGYGSQPQGQSPMMYLGVPIPAPPPAVPVSTLAGYDARFDAERIRKATKGFGTDERTIIDTLSPLDAFQMDVLSRTYEQTVGRSLKSTLEKELSSWLEYTLVLLSLGPLGGDVYLLHRACNGMGTHEDLLNEVLLGRTNQEIFLLKEAYRRTYNQDLVQIVQGELSMKTERMFNMALSGQRDESPYLNHQLVQQDVETLYRAGPGKIGTDEIAICGILISRSKEHLKAIAQAFPARHRVSLSQMIHSEFSGHMRDALFFIARGVEADGDGVVRDCELLHAAMAGMGTKDERMIYRLVRNHWNRPRFNAIKNQYQVLYRNSLRRAVEGETTGKYEKALVGIIEQN</sequence>
<keyword id="KW-0041">Annexin</keyword>
<keyword id="KW-0106">Calcium</keyword>
<keyword id="KW-0111">Calcium/phospholipid-binding</keyword>
<keyword id="KW-0677">Repeat</keyword>
<feature type="chain" id="PRO_0000451157" description="Annexin C1">
    <location>
        <begin position="1"/>
        <end position="470"/>
    </location>
</feature>
<feature type="repeat" description="Annexin 1" evidence="1">
    <location>
        <begin position="161"/>
        <end position="232"/>
    </location>
</feature>
<feature type="repeat" description="Annexin 2" evidence="1">
    <location>
        <begin position="233"/>
        <end position="304"/>
    </location>
</feature>
<feature type="repeat" description="Annexin 3" evidence="1">
    <location>
        <begin position="316"/>
        <end position="388"/>
    </location>
</feature>
<feature type="repeat" description="Annexin 4" evidence="1">
    <location>
        <begin position="395"/>
        <end position="468"/>
    </location>
</feature>
<feature type="region of interest" description="Disordered" evidence="3">
    <location>
        <begin position="1"/>
        <end position="143"/>
    </location>
</feature>
<feature type="compositionally biased region" description="Low complexity" evidence="3">
    <location>
        <begin position="15"/>
        <end position="34"/>
    </location>
</feature>
<feature type="compositionally biased region" description="Pro residues" evidence="3">
    <location>
        <begin position="82"/>
        <end position="92"/>
    </location>
</feature>
<feature type="compositionally biased region" description="Low complexity" evidence="3">
    <location>
        <begin position="93"/>
        <end position="110"/>
    </location>
</feature>
<feature type="compositionally biased region" description="Low complexity" evidence="3">
    <location>
        <begin position="128"/>
        <end position="138"/>
    </location>
</feature>
<name>ANXC1_CRYNH</name>
<proteinExistence type="inferred from homology"/>
<reference evidence="8" key="1">
    <citation type="journal article" date="2014" name="PLoS Genet.">
        <title>Analysis of the genome and transcriptome of Cryptococcus neoformans var. grubii reveals complex RNA expression and microevolution leading to virulence attenuation.</title>
        <authorList>
            <person name="Janbon G."/>
            <person name="Ormerod K.L."/>
            <person name="Paulet D."/>
            <person name="Byrnes E.J. III"/>
            <person name="Yadav V."/>
            <person name="Chatterjee G."/>
            <person name="Mullapudi N."/>
            <person name="Hon C.-C."/>
            <person name="Billmyre R.B."/>
            <person name="Brunel F."/>
            <person name="Bahn Y.-S."/>
            <person name="Chen W."/>
            <person name="Chen Y."/>
            <person name="Chow E.W.L."/>
            <person name="Coppee J.-Y."/>
            <person name="Floyd-Averette A."/>
            <person name="Gaillardin C."/>
            <person name="Gerik K.J."/>
            <person name="Goldberg J."/>
            <person name="Gonzalez-Hilarion S."/>
            <person name="Gujja S."/>
            <person name="Hamlin J.L."/>
            <person name="Hsueh Y.-P."/>
            <person name="Ianiri G."/>
            <person name="Jones S."/>
            <person name="Kodira C.D."/>
            <person name="Kozubowski L."/>
            <person name="Lam W."/>
            <person name="Marra M."/>
            <person name="Mesner L.D."/>
            <person name="Mieczkowski P.A."/>
            <person name="Moyrand F."/>
            <person name="Nielsen K."/>
            <person name="Proux C."/>
            <person name="Rossignol T."/>
            <person name="Schein J.E."/>
            <person name="Sun S."/>
            <person name="Wollschlaeger C."/>
            <person name="Wood I.A."/>
            <person name="Zeng Q."/>
            <person name="Neuveglise C."/>
            <person name="Newlon C.S."/>
            <person name="Perfect J.R."/>
            <person name="Lodge J.K."/>
            <person name="Idnurm A."/>
            <person name="Stajich J.E."/>
            <person name="Kronstad J.W."/>
            <person name="Sanyal K."/>
            <person name="Heitman J."/>
            <person name="Fraser J.A."/>
            <person name="Cuomo C.A."/>
            <person name="Dietrich F.S."/>
        </authorList>
    </citation>
    <scope>NUCLEOTIDE SEQUENCE [LARGE SCALE GENOMIC DNA]</scope>
    <source>
        <strain>H99 / ATCC 208821 / CBS 10515 / FGSC 9487</strain>
    </source>
</reference>
<reference evidence="6" key="2">
    <citation type="journal article" date="2019" name="Microbiology">
        <title>The enigmatic role of fungal annexins: the case of Cryptococcus neoformans.</title>
        <authorList>
            <person name="Maryam M."/>
            <person name="Fu M.S."/>
            <person name="Alanio A."/>
            <person name="Camacho E."/>
            <person name="Goncalves D.S."/>
            <person name="Faneuff E.E."/>
            <person name="Grossman N.T."/>
            <person name="Casadevall A."/>
            <person name="Coelho C."/>
        </authorList>
    </citation>
    <scope>FUNCTION</scope>
    <scope>DISRUPTION PHENOTYPE</scope>
</reference>
<evidence type="ECO:0000255" key="1">
    <source>
        <dbReference type="PROSITE-ProRule" id="PRU01245"/>
    </source>
</evidence>
<evidence type="ECO:0000255" key="2">
    <source>
        <dbReference type="RuleBase" id="RU003540"/>
    </source>
</evidence>
<evidence type="ECO:0000256" key="3">
    <source>
        <dbReference type="SAM" id="MobiDB-lite"/>
    </source>
</evidence>
<evidence type="ECO:0000269" key="4">
    <source>
    </source>
</evidence>
<evidence type="ECO:0000303" key="5">
    <source>
    </source>
</evidence>
<evidence type="ECO:0000305" key="6"/>
<evidence type="ECO:0000312" key="7">
    <source>
        <dbReference type="EMBL" id="AFR95419.1"/>
    </source>
</evidence>
<evidence type="ECO:0000312" key="8">
    <source>
        <dbReference type="Proteomes" id="UP000010091"/>
    </source>
</evidence>